<gene>
    <name type="primary">Cenpb</name>
    <name type="synonym">Cenp-b</name>
</gene>
<name>CENPB_MOUSE</name>
<proteinExistence type="evidence at transcript level"/>
<sequence>MGPKRRQLTFREKSRIIQEVEENPDLRKGEIARRFNIPPSTLSTILKNKRAILASERKYGVASTCRKTNKLSPYDKLEGLLIAWFQQIRAAGLPVKGIILKEKALRIAEELGMDDFTASNGWLDRFRRRHGVVACSGVTRSRARSSAPRAPAAPAGPATVPSEGSGGSTPGWHTREEQPPSVAEGYASQDVFSATETSLWYDFLSDQASGLWGGDGPARQATQRLSVLLCANADGSEKLPPLVAGKSAKPRAGQGGLPCDYTANSKGGVTTQALAKYLKALDTRMAAESRRVLLLAGRLAAQSLDTSGLRHVQLAFFPPGTVHPLERGVVQQVKGHYRQAMLLKAMAALEGQDPSGLQLGLVEALHFVAAAWQAVEPSDIATCFREAGFGGGLNATITTSFKSEGEEEEEEEEEEEEEEEEEGEGEEEEEEEEEGEEEGGEGEEEGEEEVEEEGEVDDSDEEEEESSSEGLEAEDWAQGVVEASGGFGGYSVQEEAQFPTLHFLEGGEDSDSDSDEEEDDEEEDEEDEDEEDDEDGDEVPVPSFGEAMAYFAMVKRYLTSFPIDDRVQSHILHLEHDLVHVTRKNHARQAGVRGLGHQS</sequence>
<comment type="function">
    <text evidence="2">Interacts with centromeric heterochromatin in chromosomes and binds to a specific 17 bp subset of alphoid satellite DNA, called the CENP-B box. May organize arrays of centromere satellite DNA into a higher-order structure which then directs centromere formation and kinetochore assembly in mammalian chromosomes.</text>
</comment>
<comment type="subunit">
    <text evidence="2">Antiparallel homodimer. Interacts with CENPT. Identified in a centromere complex containing histones H2A, H2B and H4, and at least CENPA, CENPB, CENPC, CENPT, CENPN, HJURP, SUPT16H, SSRP1 and RSF1.</text>
</comment>
<comment type="subcellular location">
    <subcellularLocation>
        <location evidence="2">Nucleus</location>
    </subcellularLocation>
    <subcellularLocation>
        <location evidence="2">Chromosome</location>
        <location evidence="2">Centromere</location>
    </subcellularLocation>
</comment>
<comment type="PTM">
    <text evidence="6">Poly-ADP-ribosylated by PARP1.</text>
</comment>
<comment type="PTM">
    <text evidence="2">N-terminally methylated by METTL11A/NTM1. Alpha-N-methylation is stimulated in response to extracellular stimuli, including increased cell density and heat shock, and seems to facilitate binding to CENP-B boxes. Chromatin-bound CENP-B is primarily trimethylated.</text>
</comment>
<evidence type="ECO:0000250" key="1"/>
<evidence type="ECO:0000250" key="2">
    <source>
        <dbReference type="UniProtKB" id="P07199"/>
    </source>
</evidence>
<evidence type="ECO:0000255" key="3">
    <source>
        <dbReference type="PROSITE-ProRule" id="PRU00320"/>
    </source>
</evidence>
<evidence type="ECO:0000255" key="4">
    <source>
        <dbReference type="PROSITE-ProRule" id="PRU00583"/>
    </source>
</evidence>
<evidence type="ECO:0000256" key="5">
    <source>
        <dbReference type="SAM" id="MobiDB-lite"/>
    </source>
</evidence>
<evidence type="ECO:0000269" key="6">
    <source>
    </source>
</evidence>
<evidence type="ECO:0000305" key="7"/>
<accession>P27790</accession>
<accession>Q7TSG8</accession>
<feature type="initiator methionine" description="Removed" evidence="2">
    <location>
        <position position="1"/>
    </location>
</feature>
<feature type="chain" id="PRO_0000126126" description="Major centromere autoantigen B">
    <location>
        <begin position="2"/>
        <end position="599"/>
    </location>
</feature>
<feature type="domain" description="HTH psq-type" evidence="3">
    <location>
        <begin position="2"/>
        <end position="52"/>
    </location>
</feature>
<feature type="domain" description="HTH CENPB-type" evidence="4">
    <location>
        <begin position="65"/>
        <end position="136"/>
    </location>
</feature>
<feature type="DNA-binding region" description="H-T-H motif" evidence="1">
    <location>
        <begin position="28"/>
        <end position="48"/>
    </location>
</feature>
<feature type="DNA-binding region" description="H-T-H motif" evidence="1">
    <location>
        <begin position="97"/>
        <end position="129"/>
    </location>
</feature>
<feature type="region of interest" description="Disordered" evidence="5">
    <location>
        <begin position="143"/>
        <end position="183"/>
    </location>
</feature>
<feature type="region of interest" description="Disordered" evidence="5">
    <location>
        <begin position="394"/>
        <end position="476"/>
    </location>
</feature>
<feature type="region of interest" description="Disordered" evidence="5">
    <location>
        <begin position="498"/>
        <end position="543"/>
    </location>
</feature>
<feature type="region of interest" description="Homodimerization" evidence="1">
    <location>
        <begin position="536"/>
        <end position="599"/>
    </location>
</feature>
<feature type="compositionally biased region" description="Low complexity" evidence="5">
    <location>
        <begin position="144"/>
        <end position="158"/>
    </location>
</feature>
<feature type="compositionally biased region" description="Acidic residues" evidence="5">
    <location>
        <begin position="405"/>
        <end position="475"/>
    </location>
</feature>
<feature type="compositionally biased region" description="Acidic residues" evidence="5">
    <location>
        <begin position="506"/>
        <end position="538"/>
    </location>
</feature>
<feature type="modified residue" description="N,N,N-trimethylglycine" evidence="2">
    <location>
        <position position="2"/>
    </location>
</feature>
<feature type="modified residue" description="Phosphoserine" evidence="2">
    <location>
        <position position="165"/>
    </location>
</feature>
<feature type="modified residue" description="Phosphothreonine" evidence="2">
    <location>
        <position position="396"/>
    </location>
</feature>
<feature type="modified residue" description="Phosphothreonine" evidence="2">
    <location>
        <position position="398"/>
    </location>
</feature>
<feature type="cross-link" description="Glycyl lysine isopeptide (Lys-Gly) (interchain with G-Cter in SUMO2)" evidence="2">
    <location>
        <position position="246"/>
    </location>
</feature>
<feature type="sequence conflict" description="In Ref. 1; CAA38878." evidence="7" ref="1">
    <original>S</original>
    <variation>T</variation>
    <location>
        <position position="145"/>
    </location>
</feature>
<feature type="sequence conflict" description="In Ref. 1; CAA38878." evidence="7" ref="1">
    <original>APA</original>
    <variation>PQP</variation>
    <location>
        <begin position="150"/>
        <end position="152"/>
    </location>
</feature>
<reference key="1">
    <citation type="journal article" date="1991" name="Chromosoma">
        <title>CENP-B is a highly conserved mammalian centromere protein with homology to the helix-loop-helix family of proteins.</title>
        <authorList>
            <person name="Sullivan K.F."/>
            <person name="Glass C.A."/>
        </authorList>
    </citation>
    <scope>NUCLEOTIDE SEQUENCE [GENOMIC DNA]</scope>
    <source>
        <strain>C57BL/6J</strain>
        <tissue>Liver</tissue>
    </source>
</reference>
<reference key="2">
    <citation type="journal article" date="2009" name="PLoS Biol.">
        <title>Lineage-specific biology revealed by a finished genome assembly of the mouse.</title>
        <authorList>
            <person name="Church D.M."/>
            <person name="Goodstadt L."/>
            <person name="Hillier L.W."/>
            <person name="Zody M.C."/>
            <person name="Goldstein S."/>
            <person name="She X."/>
            <person name="Bult C.J."/>
            <person name="Agarwala R."/>
            <person name="Cherry J.L."/>
            <person name="DiCuccio M."/>
            <person name="Hlavina W."/>
            <person name="Kapustin Y."/>
            <person name="Meric P."/>
            <person name="Maglott D."/>
            <person name="Birtle Z."/>
            <person name="Marques A.C."/>
            <person name="Graves T."/>
            <person name="Zhou S."/>
            <person name="Teague B."/>
            <person name="Potamousis K."/>
            <person name="Churas C."/>
            <person name="Place M."/>
            <person name="Herschleb J."/>
            <person name="Runnheim R."/>
            <person name="Forrest D."/>
            <person name="Amos-Landgraf J."/>
            <person name="Schwartz D.C."/>
            <person name="Cheng Z."/>
            <person name="Lindblad-Toh K."/>
            <person name="Eichler E.E."/>
            <person name="Ponting C.P."/>
        </authorList>
    </citation>
    <scope>NUCLEOTIDE SEQUENCE [LARGE SCALE GENOMIC DNA]</scope>
    <source>
        <strain>C57BL/6J</strain>
    </source>
</reference>
<reference key="3">
    <citation type="journal article" date="2004" name="Genome Res.">
        <title>The status, quality, and expansion of the NIH full-length cDNA project: the Mammalian Gene Collection (MGC).</title>
        <authorList>
            <consortium name="The MGC Project Team"/>
        </authorList>
    </citation>
    <scope>NUCLEOTIDE SEQUENCE [LARGE SCALE MRNA]</scope>
    <source>
        <strain>FVB/N</strain>
        <tissue>Colon</tissue>
        <tissue>Embryo</tissue>
        <tissue>Jaw</tissue>
        <tissue>Limb</tissue>
    </source>
</reference>
<reference key="4">
    <citation type="journal article" date="2002" name="J. Biol. Chem.">
        <title>Centromere proteins Cenpa, Cenpb, and Bub3 interact with poly(ADP-ribose) polymerase-1 protein and are poly(ADP-ribosyl)ated.</title>
        <authorList>
            <person name="Saxena A."/>
            <person name="Saffery R."/>
            <person name="Wong L.H."/>
            <person name="Kalitsis P."/>
            <person name="Choo K.H."/>
        </authorList>
    </citation>
    <scope>POLY-ADP-RIBOSYLATION BY PARP1</scope>
</reference>
<organism>
    <name type="scientific">Mus musculus</name>
    <name type="common">Mouse</name>
    <dbReference type="NCBI Taxonomy" id="10090"/>
    <lineage>
        <taxon>Eukaryota</taxon>
        <taxon>Metazoa</taxon>
        <taxon>Chordata</taxon>
        <taxon>Craniata</taxon>
        <taxon>Vertebrata</taxon>
        <taxon>Euteleostomi</taxon>
        <taxon>Mammalia</taxon>
        <taxon>Eutheria</taxon>
        <taxon>Euarchontoglires</taxon>
        <taxon>Glires</taxon>
        <taxon>Rodentia</taxon>
        <taxon>Myomorpha</taxon>
        <taxon>Muroidea</taxon>
        <taxon>Muridae</taxon>
        <taxon>Murinae</taxon>
        <taxon>Mus</taxon>
        <taxon>Mus</taxon>
    </lineage>
</organism>
<protein>
    <recommendedName>
        <fullName>Major centromere autoantigen B</fullName>
    </recommendedName>
    <alternativeName>
        <fullName>Centromere protein B</fullName>
        <shortName>CENP-B</shortName>
    </alternativeName>
</protein>
<keyword id="KW-0013">ADP-ribosylation</keyword>
<keyword id="KW-0137">Centromere</keyword>
<keyword id="KW-0158">Chromosome</keyword>
<keyword id="KW-0238">DNA-binding</keyword>
<keyword id="KW-1017">Isopeptide bond</keyword>
<keyword id="KW-0488">Methylation</keyword>
<keyword id="KW-0539">Nucleus</keyword>
<keyword id="KW-0597">Phosphoprotein</keyword>
<keyword id="KW-1185">Reference proteome</keyword>
<keyword id="KW-0832">Ubl conjugation</keyword>
<dbReference type="EMBL" id="X55038">
    <property type="protein sequence ID" value="CAA38878.1"/>
    <property type="molecule type" value="Genomic_DNA"/>
</dbReference>
<dbReference type="EMBL" id="AL831736">
    <property type="status" value="NOT_ANNOTATED_CDS"/>
    <property type="molecule type" value="Genomic_DNA"/>
</dbReference>
<dbReference type="EMBL" id="BC053333">
    <property type="protein sequence ID" value="AAH53333.1"/>
    <property type="molecule type" value="mRNA"/>
</dbReference>
<dbReference type="EMBL" id="BC071269">
    <property type="protein sequence ID" value="AAH71269.1"/>
    <property type="molecule type" value="mRNA"/>
</dbReference>
<dbReference type="EMBL" id="BC075733">
    <property type="protein sequence ID" value="AAH75733.1"/>
    <property type="molecule type" value="mRNA"/>
</dbReference>
<dbReference type="CCDS" id="CCDS16757.1"/>
<dbReference type="RefSeq" id="NP_031708.2">
    <property type="nucleotide sequence ID" value="NM_007682.3"/>
</dbReference>
<dbReference type="SMR" id="P27790"/>
<dbReference type="BioGRID" id="198675">
    <property type="interactions" value="3"/>
</dbReference>
<dbReference type="FunCoup" id="P27790">
    <property type="interactions" value="192"/>
</dbReference>
<dbReference type="IntAct" id="P27790">
    <property type="interactions" value="1"/>
</dbReference>
<dbReference type="STRING" id="10090.ENSMUSP00000086938"/>
<dbReference type="GlyGen" id="P27790">
    <property type="glycosylation" value="1 site"/>
</dbReference>
<dbReference type="iPTMnet" id="P27790"/>
<dbReference type="PhosphoSitePlus" id="P27790"/>
<dbReference type="PaxDb" id="10090-ENSMUSP00000086938"/>
<dbReference type="PeptideAtlas" id="P27790"/>
<dbReference type="ProteomicsDB" id="280058"/>
<dbReference type="Pumba" id="P27790"/>
<dbReference type="Antibodypedia" id="23700">
    <property type="antibodies" value="144 antibodies from 23 providers"/>
</dbReference>
<dbReference type="Ensembl" id="ENSMUST00000089510.5">
    <property type="protein sequence ID" value="ENSMUSP00000086938.4"/>
    <property type="gene ID" value="ENSMUSG00000068267.6"/>
</dbReference>
<dbReference type="GeneID" id="12616"/>
<dbReference type="KEGG" id="mmu:12616"/>
<dbReference type="UCSC" id="uc008mkx.1">
    <property type="organism name" value="mouse"/>
</dbReference>
<dbReference type="AGR" id="MGI:88376"/>
<dbReference type="CTD" id="1059"/>
<dbReference type="MGI" id="MGI:88376">
    <property type="gene designation" value="Cenpb"/>
</dbReference>
<dbReference type="VEuPathDB" id="HostDB:ENSMUSG00000068267"/>
<dbReference type="eggNOG" id="KOG3105">
    <property type="taxonomic scope" value="Eukaryota"/>
</dbReference>
<dbReference type="GeneTree" id="ENSGT00940000162810"/>
<dbReference type="HOGENOM" id="CLU_018294_10_0_1"/>
<dbReference type="InParanoid" id="P27790"/>
<dbReference type="OMA" id="IETSLWY"/>
<dbReference type="OrthoDB" id="125347at2759"/>
<dbReference type="PhylomeDB" id="P27790"/>
<dbReference type="TreeFam" id="TF101131"/>
<dbReference type="BioGRID-ORCS" id="12616">
    <property type="hits" value="4 hits in 81 CRISPR screens"/>
</dbReference>
<dbReference type="ChiTaRS" id="Cenpb">
    <property type="organism name" value="mouse"/>
</dbReference>
<dbReference type="PRO" id="PR:P27790"/>
<dbReference type="Proteomes" id="UP000000589">
    <property type="component" value="Chromosome 2"/>
</dbReference>
<dbReference type="RNAct" id="P27790">
    <property type="molecule type" value="protein"/>
</dbReference>
<dbReference type="Bgee" id="ENSMUSG00000068267">
    <property type="expression patterns" value="Expressed in hindlimb stylopod muscle and 231 other cell types or tissues"/>
</dbReference>
<dbReference type="GO" id="GO:0000775">
    <property type="term" value="C:chromosome, centromeric region"/>
    <property type="evidence" value="ECO:0000266"/>
    <property type="project" value="MGI"/>
</dbReference>
<dbReference type="GO" id="GO:0000779">
    <property type="term" value="C:condensed chromosome, centromeric region"/>
    <property type="evidence" value="ECO:0000314"/>
    <property type="project" value="MGI"/>
</dbReference>
<dbReference type="GO" id="GO:0016604">
    <property type="term" value="C:nuclear body"/>
    <property type="evidence" value="ECO:0007669"/>
    <property type="project" value="Ensembl"/>
</dbReference>
<dbReference type="GO" id="GO:0005721">
    <property type="term" value="C:pericentric heterochromatin"/>
    <property type="evidence" value="ECO:0000314"/>
    <property type="project" value="MGI"/>
</dbReference>
<dbReference type="GO" id="GO:0003682">
    <property type="term" value="F:chromatin binding"/>
    <property type="evidence" value="ECO:0007669"/>
    <property type="project" value="InterPro"/>
</dbReference>
<dbReference type="GO" id="GO:0003677">
    <property type="term" value="F:DNA binding"/>
    <property type="evidence" value="ECO:0007669"/>
    <property type="project" value="UniProtKB-KW"/>
</dbReference>
<dbReference type="FunFam" id="1.10.10.60:FF:000313">
    <property type="entry name" value="major centromere autoantigen B"/>
    <property type="match status" value="1"/>
</dbReference>
<dbReference type="FunFam" id="1.10.287.1090:FF:000001">
    <property type="entry name" value="major centromere autoantigen B"/>
    <property type="match status" value="1"/>
</dbReference>
<dbReference type="Gene3D" id="1.10.287.1090">
    <property type="entry name" value="Dimerisation domain of CENP-B"/>
    <property type="match status" value="1"/>
</dbReference>
<dbReference type="Gene3D" id="1.10.10.60">
    <property type="entry name" value="Homeodomain-like"/>
    <property type="match status" value="2"/>
</dbReference>
<dbReference type="InterPro" id="IPR015115">
    <property type="entry name" value="CenpB_C"/>
</dbReference>
<dbReference type="InterPro" id="IPR050863">
    <property type="entry name" value="CenT-Element_Derived"/>
</dbReference>
<dbReference type="InterPro" id="IPR004875">
    <property type="entry name" value="DDE_SF_endonuclease_dom"/>
</dbReference>
<dbReference type="InterPro" id="IPR034882">
    <property type="entry name" value="Dimerisation_CENP-B_sf"/>
</dbReference>
<dbReference type="InterPro" id="IPR009057">
    <property type="entry name" value="Homeodomain-like_sf"/>
</dbReference>
<dbReference type="InterPro" id="IPR006600">
    <property type="entry name" value="HTH_CenpB_DNA-bd_dom"/>
</dbReference>
<dbReference type="InterPro" id="IPR007889">
    <property type="entry name" value="HTH_Psq"/>
</dbReference>
<dbReference type="PANTHER" id="PTHR19303:SF69">
    <property type="entry name" value="MAJOR CENTROMERE AUTOANTIGEN B"/>
    <property type="match status" value="1"/>
</dbReference>
<dbReference type="PANTHER" id="PTHR19303">
    <property type="entry name" value="TRANSPOSON"/>
    <property type="match status" value="1"/>
</dbReference>
<dbReference type="Pfam" id="PF09026">
    <property type="entry name" value="CENP-B_dimeris"/>
    <property type="match status" value="1"/>
</dbReference>
<dbReference type="Pfam" id="PF04218">
    <property type="entry name" value="CENP-B_N"/>
    <property type="match status" value="1"/>
</dbReference>
<dbReference type="Pfam" id="PF03184">
    <property type="entry name" value="DDE_1"/>
    <property type="match status" value="1"/>
</dbReference>
<dbReference type="Pfam" id="PF03221">
    <property type="entry name" value="HTH_Tnp_Tc5"/>
    <property type="match status" value="1"/>
</dbReference>
<dbReference type="SMART" id="SM00674">
    <property type="entry name" value="CENPB"/>
    <property type="match status" value="1"/>
</dbReference>
<dbReference type="SUPFAM" id="SSF101160">
    <property type="entry name" value="Dimerisation domain of CENP-B"/>
    <property type="match status" value="1"/>
</dbReference>
<dbReference type="SUPFAM" id="SSF46689">
    <property type="entry name" value="Homeodomain-like"/>
    <property type="match status" value="2"/>
</dbReference>
<dbReference type="PROSITE" id="PS51253">
    <property type="entry name" value="HTH_CENPB"/>
    <property type="match status" value="1"/>
</dbReference>
<dbReference type="PROSITE" id="PS50960">
    <property type="entry name" value="HTH_PSQ"/>
    <property type="match status" value="1"/>
</dbReference>